<dbReference type="EMBL" id="CP000266">
    <property type="protein sequence ID" value="ABF05369.1"/>
    <property type="molecule type" value="Genomic_DNA"/>
</dbReference>
<dbReference type="RefSeq" id="WP_000062611.1">
    <property type="nucleotide sequence ID" value="NC_008258.1"/>
</dbReference>
<dbReference type="SMR" id="Q0SZZ6"/>
<dbReference type="GeneID" id="93778681"/>
<dbReference type="KEGG" id="sfv:SFV_3326"/>
<dbReference type="HOGENOM" id="CLU_098428_0_0_6"/>
<dbReference type="Proteomes" id="UP000000659">
    <property type="component" value="Chromosome"/>
</dbReference>
<dbReference type="GO" id="GO:1990904">
    <property type="term" value="C:ribonucleoprotein complex"/>
    <property type="evidence" value="ECO:0007669"/>
    <property type="project" value="UniProtKB-KW"/>
</dbReference>
<dbReference type="GO" id="GO:0005840">
    <property type="term" value="C:ribosome"/>
    <property type="evidence" value="ECO:0007669"/>
    <property type="project" value="UniProtKB-KW"/>
</dbReference>
<dbReference type="GO" id="GO:0019843">
    <property type="term" value="F:rRNA binding"/>
    <property type="evidence" value="ECO:0007669"/>
    <property type="project" value="UniProtKB-UniRule"/>
</dbReference>
<dbReference type="GO" id="GO:0003735">
    <property type="term" value="F:structural constituent of ribosome"/>
    <property type="evidence" value="ECO:0007669"/>
    <property type="project" value="InterPro"/>
</dbReference>
<dbReference type="GO" id="GO:0006412">
    <property type="term" value="P:translation"/>
    <property type="evidence" value="ECO:0007669"/>
    <property type="project" value="UniProtKB-UniRule"/>
</dbReference>
<dbReference type="FunFam" id="3.30.1370.30:FF:000003">
    <property type="entry name" value="30S ribosomal protein S8"/>
    <property type="match status" value="1"/>
</dbReference>
<dbReference type="FunFam" id="3.30.1490.10:FF:000001">
    <property type="entry name" value="30S ribosomal protein S8"/>
    <property type="match status" value="1"/>
</dbReference>
<dbReference type="Gene3D" id="3.30.1370.30">
    <property type="match status" value="1"/>
</dbReference>
<dbReference type="Gene3D" id="3.30.1490.10">
    <property type="match status" value="1"/>
</dbReference>
<dbReference type="HAMAP" id="MF_01302_B">
    <property type="entry name" value="Ribosomal_uS8_B"/>
    <property type="match status" value="1"/>
</dbReference>
<dbReference type="InterPro" id="IPR000630">
    <property type="entry name" value="Ribosomal_uS8"/>
</dbReference>
<dbReference type="InterPro" id="IPR047863">
    <property type="entry name" value="Ribosomal_uS8_CS"/>
</dbReference>
<dbReference type="InterPro" id="IPR035987">
    <property type="entry name" value="Ribosomal_uS8_sf"/>
</dbReference>
<dbReference type="NCBIfam" id="NF001109">
    <property type="entry name" value="PRK00136.1"/>
    <property type="match status" value="1"/>
</dbReference>
<dbReference type="PANTHER" id="PTHR11758">
    <property type="entry name" value="40S RIBOSOMAL PROTEIN S15A"/>
    <property type="match status" value="1"/>
</dbReference>
<dbReference type="Pfam" id="PF00410">
    <property type="entry name" value="Ribosomal_S8"/>
    <property type="match status" value="1"/>
</dbReference>
<dbReference type="SUPFAM" id="SSF56047">
    <property type="entry name" value="Ribosomal protein S8"/>
    <property type="match status" value="1"/>
</dbReference>
<dbReference type="PROSITE" id="PS00053">
    <property type="entry name" value="RIBOSOMAL_S8"/>
    <property type="match status" value="1"/>
</dbReference>
<feature type="chain" id="PRO_0000290933" description="Small ribosomal subunit protein uS8">
    <location>
        <begin position="1"/>
        <end position="130"/>
    </location>
</feature>
<organism>
    <name type="scientific">Shigella flexneri serotype 5b (strain 8401)</name>
    <dbReference type="NCBI Taxonomy" id="373384"/>
    <lineage>
        <taxon>Bacteria</taxon>
        <taxon>Pseudomonadati</taxon>
        <taxon>Pseudomonadota</taxon>
        <taxon>Gammaproteobacteria</taxon>
        <taxon>Enterobacterales</taxon>
        <taxon>Enterobacteriaceae</taxon>
        <taxon>Shigella</taxon>
    </lineage>
</organism>
<accession>Q0SZZ6</accession>
<reference key="1">
    <citation type="journal article" date="2006" name="BMC Genomics">
        <title>Complete genome sequence of Shigella flexneri 5b and comparison with Shigella flexneri 2a.</title>
        <authorList>
            <person name="Nie H."/>
            <person name="Yang F."/>
            <person name="Zhang X."/>
            <person name="Yang J."/>
            <person name="Chen L."/>
            <person name="Wang J."/>
            <person name="Xiong Z."/>
            <person name="Peng J."/>
            <person name="Sun L."/>
            <person name="Dong J."/>
            <person name="Xue Y."/>
            <person name="Xu X."/>
            <person name="Chen S."/>
            <person name="Yao Z."/>
            <person name="Shen Y."/>
            <person name="Jin Q."/>
        </authorList>
    </citation>
    <scope>NUCLEOTIDE SEQUENCE [LARGE SCALE GENOMIC DNA]</scope>
    <source>
        <strain>8401</strain>
    </source>
</reference>
<keyword id="KW-0687">Ribonucleoprotein</keyword>
<keyword id="KW-0689">Ribosomal protein</keyword>
<keyword id="KW-0694">RNA-binding</keyword>
<keyword id="KW-0699">rRNA-binding</keyword>
<comment type="function">
    <text evidence="1">One of the primary rRNA binding proteins, it binds directly to 16S rRNA central domain where it helps coordinate assembly of the platform of the 30S subunit.</text>
</comment>
<comment type="subunit">
    <text evidence="1">Part of the 30S ribosomal subunit. Contacts proteins S5 and S12.</text>
</comment>
<comment type="similarity">
    <text evidence="1">Belongs to the universal ribosomal protein uS8 family.</text>
</comment>
<evidence type="ECO:0000255" key="1">
    <source>
        <dbReference type="HAMAP-Rule" id="MF_01302"/>
    </source>
</evidence>
<evidence type="ECO:0000305" key="2"/>
<proteinExistence type="inferred from homology"/>
<protein>
    <recommendedName>
        <fullName evidence="1">Small ribosomal subunit protein uS8</fullName>
    </recommendedName>
    <alternativeName>
        <fullName evidence="2">30S ribosomal protein S8</fullName>
    </alternativeName>
</protein>
<gene>
    <name evidence="1" type="primary">rpsH</name>
    <name type="ordered locus">SFV_3326</name>
</gene>
<name>RS8_SHIF8</name>
<sequence length="130" mass="14127">MSMQDPIADMLTRIRNGQAANKAAVTMPSSKLKVAIANVLKEEGFIEDFKVEGDTKPELELTLKYFQGKAVVESIQRVSRPGLRIYKRKDELPKVMAGLGIAVVSTSKGVMTDRAARQAGLGGEIICYVA</sequence>